<organism>
    <name type="scientific">Talaromyces purpureogenus</name>
    <name type="common">Soft rot fungus</name>
    <name type="synonym">Penicillium purpureogenum</name>
    <dbReference type="NCBI Taxonomy" id="1266744"/>
    <lineage>
        <taxon>Eukaryota</taxon>
        <taxon>Fungi</taxon>
        <taxon>Dikarya</taxon>
        <taxon>Ascomycota</taxon>
        <taxon>Pezizomycotina</taxon>
        <taxon>Eurotiomycetes</taxon>
        <taxon>Eurotiomycetidae</taxon>
        <taxon>Eurotiales</taxon>
        <taxon>Trichocomaceae</taxon>
        <taxon>Talaromyces</taxon>
        <taxon>Talaromyces sect. Talaromyces</taxon>
    </lineage>
</organism>
<accession>Q96W72</accession>
<accession>Q12666</accession>
<name>XYNB_TALPU</name>
<keyword id="KW-0119">Carbohydrate metabolism</keyword>
<keyword id="KW-0326">Glycosidase</keyword>
<keyword id="KW-0378">Hydrolase</keyword>
<keyword id="KW-0624">Polysaccharide degradation</keyword>
<keyword id="KW-0964">Secreted</keyword>
<keyword id="KW-0732">Signal</keyword>
<keyword id="KW-0858">Xylan degradation</keyword>
<feature type="signal peptide" evidence="2">
    <location>
        <begin position="1"/>
        <end position="16"/>
    </location>
</feature>
<feature type="chain" id="PRO_0000429662" description="Endo-1,4-beta-xylanase B">
    <location>
        <begin position="17"/>
        <end position="208"/>
    </location>
</feature>
<feature type="domain" description="GH11" evidence="3">
    <location>
        <begin position="17"/>
        <end position="207"/>
    </location>
</feature>
<feature type="active site" description="Nucleophile" evidence="1">
    <location>
        <position position="101"/>
    </location>
</feature>
<feature type="active site" description="Proton donor" evidence="4">
    <location>
        <position position="194"/>
    </location>
</feature>
<feature type="sequence conflict" description="In Ref. 1; CAA90390." evidence="7" ref="1">
    <original>TTLAAPA</original>
    <variation>RHSPPLS</variation>
    <location>
        <begin position="13"/>
        <end position="19"/>
    </location>
</feature>
<feature type="sequence conflict" description="In Ref. 1; CAA90390." evidence="7" ref="1">
    <original>H</original>
    <variation>Y</variation>
    <location>
        <position position="103"/>
    </location>
</feature>
<feature type="sequence conflict" description="In Ref. 1; CAA90390." evidence="7" ref="1">
    <original>KH</original>
    <variation>ND</variation>
    <location>
        <begin position="178"/>
        <end position="179"/>
    </location>
</feature>
<gene>
    <name type="primary">xynB</name>
</gene>
<sequence length="208" mass="21869">MKVTAAFAGLLATTLAAPATELVTRSINYVQNYNGNLGAFSYNEGAGTFSMYWQQGVSNDFVVGLGRSTGSSNPITYSASYSASGGSYLAVYGWVNSPQAEYHVVEAYGNYNPCSSGSATNLGTVSSDGGTYQVCTDTRVNQPSITGTSTFTQFFSVRQGSRTSGTVTIANHFNFWAKHGFGNSNFNYQVVAVEAWSGTGTASVTVSA</sequence>
<reference key="1">
    <citation type="journal article" date="1997" name="Gene">
        <title>Cloning, sequencing and expression of the cDNA of endoxylanase B from Penicillium purpurogenum.</title>
        <authorList>
            <person name="Diaz R."/>
            <person name="Sapag A."/>
            <person name="Peirano A."/>
            <person name="Steiner J."/>
            <person name="Eyzaguirre J."/>
        </authorList>
    </citation>
    <scope>NUCLEOTIDE SEQUENCE [MRNA]</scope>
</reference>
<reference key="2">
    <citation type="journal article" date="2002" name="Gene">
        <title>Differences in expression of two endoxylanase genes (xynA and xynB) from Penicillium purpurogenum.</title>
        <authorList>
            <person name="Chavez R."/>
            <person name="Schachter K."/>
            <person name="Navarro C."/>
            <person name="Peirano A."/>
            <person name="Aguirre C."/>
            <person name="Bull P."/>
            <person name="Eyzaguirre J."/>
        </authorList>
    </citation>
    <scope>NUCLEOTIDE SEQUENCE [GENOMIC DNA]</scope>
    <scope>SUBCELLULAR LOCATION</scope>
    <scope>CATALYTIC ACTIVITY</scope>
    <scope>INDUCTION</scope>
</reference>
<reference key="3">
    <citation type="journal article" date="1995" name="J. Biotechnol.">
        <title>Penicillium purpurogenum produces several xylanases: purification and properties of two of the enzymes.</title>
        <authorList>
            <person name="Belancic A."/>
            <person name="Scarpa J."/>
            <person name="Peirano A."/>
            <person name="Diaz R."/>
            <person name="Steiner J."/>
            <person name="Eyzaguirre J."/>
        </authorList>
    </citation>
    <scope>SUBCELLULAR LOCATION</scope>
    <scope>FUNCTION</scope>
    <scope>CATALYTIC ACTIVITY</scope>
    <scope>BIOPHYSICOCHEMICAL PROPERTIES</scope>
    <scope>ACTIVITY REGULATION</scope>
</reference>
<evidence type="ECO:0000250" key="1"/>
<evidence type="ECO:0000255" key="2"/>
<evidence type="ECO:0000255" key="3">
    <source>
        <dbReference type="PROSITE-ProRule" id="PRU01097"/>
    </source>
</evidence>
<evidence type="ECO:0000255" key="4">
    <source>
        <dbReference type="PROSITE-ProRule" id="PRU10063"/>
    </source>
</evidence>
<evidence type="ECO:0000269" key="5">
    <source>
    </source>
</evidence>
<evidence type="ECO:0000269" key="6">
    <source>
    </source>
</evidence>
<evidence type="ECO:0000305" key="7"/>
<comment type="function">
    <text evidence="6">Endo-1,4-beta-xylanase involved in the hydrolysis of xylan, a major structural heterogeneous polysaccharide found in plant biomass representing the second most abundant polysaccharide in the biosphere, after cellulose.</text>
</comment>
<comment type="catalytic activity">
    <reaction evidence="5 6">
        <text>Endohydrolysis of (1-&gt;4)-beta-D-xylosidic linkages in xylans.</text>
        <dbReference type="EC" id="3.2.1.8"/>
    </reaction>
</comment>
<comment type="activity regulation">
    <text evidence="6">N-bromosuccinimide completely inhibits the catalytic activity.</text>
</comment>
<comment type="biophysicochemical properties">
    <phDependence>
        <text evidence="6">Optimum pH is 3.5.</text>
    </phDependence>
    <temperatureDependence>
        <text evidence="6">Optimum temperature is 50 degrees Celsius.</text>
    </temperatureDependence>
</comment>
<comment type="pathway">
    <text>Glycan degradation; xylan degradation.</text>
</comment>
<comment type="subcellular location">
    <subcellularLocation>
        <location evidence="5">Secreted</location>
    </subcellularLocation>
</comment>
<comment type="similarity">
    <text evidence="7">Belongs to the glycosyl hydrolase 11 (cellulase G) family.</text>
</comment>
<dbReference type="EC" id="3.2.1.8"/>
<dbReference type="EMBL" id="Z50050">
    <property type="protein sequence ID" value="CAA90390.1"/>
    <property type="molecule type" value="mRNA"/>
</dbReference>
<dbReference type="EMBL" id="AF359553">
    <property type="protein sequence ID" value="AAK50762.1"/>
    <property type="molecule type" value="Genomic_DNA"/>
</dbReference>
<dbReference type="SMR" id="Q96W72"/>
<dbReference type="CAZy" id="GH11">
    <property type="family name" value="Glycoside Hydrolase Family 11"/>
</dbReference>
<dbReference type="UniPathway" id="UPA00114"/>
<dbReference type="GO" id="GO:0005576">
    <property type="term" value="C:extracellular region"/>
    <property type="evidence" value="ECO:0007669"/>
    <property type="project" value="UniProtKB-SubCell"/>
</dbReference>
<dbReference type="GO" id="GO:0031176">
    <property type="term" value="F:endo-1,4-beta-xylanase activity"/>
    <property type="evidence" value="ECO:0007669"/>
    <property type="project" value="UniProtKB-EC"/>
</dbReference>
<dbReference type="GO" id="GO:0045493">
    <property type="term" value="P:xylan catabolic process"/>
    <property type="evidence" value="ECO:0007669"/>
    <property type="project" value="UniProtKB-UniPathway"/>
</dbReference>
<dbReference type="FunFam" id="2.60.120.180:FF:000002">
    <property type="entry name" value="Endo-1,4-beta-xylanase A"/>
    <property type="match status" value="1"/>
</dbReference>
<dbReference type="Gene3D" id="2.60.120.180">
    <property type="match status" value="1"/>
</dbReference>
<dbReference type="InterPro" id="IPR013320">
    <property type="entry name" value="ConA-like_dom_sf"/>
</dbReference>
<dbReference type="InterPro" id="IPR013319">
    <property type="entry name" value="GH11/12"/>
</dbReference>
<dbReference type="InterPro" id="IPR033119">
    <property type="entry name" value="GH11_AS_2"/>
</dbReference>
<dbReference type="InterPro" id="IPR033123">
    <property type="entry name" value="GH11_dom"/>
</dbReference>
<dbReference type="InterPro" id="IPR001137">
    <property type="entry name" value="Glyco_hydro_11"/>
</dbReference>
<dbReference type="PANTHER" id="PTHR46828">
    <property type="entry name" value="ENDO-1,4-BETA-XYLANASE A-RELATED"/>
    <property type="match status" value="1"/>
</dbReference>
<dbReference type="PANTHER" id="PTHR46828:SF2">
    <property type="entry name" value="ENDO-1,4-BETA-XYLANASE A-RELATED"/>
    <property type="match status" value="1"/>
</dbReference>
<dbReference type="Pfam" id="PF00457">
    <property type="entry name" value="Glyco_hydro_11"/>
    <property type="match status" value="1"/>
</dbReference>
<dbReference type="PRINTS" id="PR00911">
    <property type="entry name" value="GLHYDRLASE11"/>
</dbReference>
<dbReference type="SUPFAM" id="SSF49899">
    <property type="entry name" value="Concanavalin A-like lectins/glucanases"/>
    <property type="match status" value="1"/>
</dbReference>
<dbReference type="PROSITE" id="PS00777">
    <property type="entry name" value="GH11_2"/>
    <property type="match status" value="1"/>
</dbReference>
<dbReference type="PROSITE" id="PS51761">
    <property type="entry name" value="GH11_3"/>
    <property type="match status" value="1"/>
</dbReference>
<proteinExistence type="evidence at protein level"/>
<protein>
    <recommendedName>
        <fullName>Endo-1,4-beta-xylanase B</fullName>
        <shortName>Xylanase B</shortName>
        <ecNumber>3.2.1.8</ecNumber>
    </recommendedName>
    <alternativeName>
        <fullName>1,4-beta-D-xylan xylanohydrolase B</fullName>
    </alternativeName>
</protein>